<protein>
    <recommendedName>
        <fullName evidence="1">Probable transcriptional regulatory protein TC_0742</fullName>
    </recommendedName>
</protein>
<keyword id="KW-0963">Cytoplasm</keyword>
<keyword id="KW-0238">DNA-binding</keyword>
<keyword id="KW-0804">Transcription</keyword>
<keyword id="KW-0805">Transcription regulation</keyword>
<gene>
    <name type="ordered locus">TC_0742</name>
</gene>
<evidence type="ECO:0000255" key="1">
    <source>
        <dbReference type="HAMAP-Rule" id="MF_00693"/>
    </source>
</evidence>
<evidence type="ECO:0000256" key="2">
    <source>
        <dbReference type="SAM" id="MobiDB-lite"/>
    </source>
</evidence>
<proteinExistence type="inferred from homology"/>
<organism>
    <name type="scientific">Chlamydia muridarum (strain MoPn / Nigg)</name>
    <dbReference type="NCBI Taxonomy" id="243161"/>
    <lineage>
        <taxon>Bacteria</taxon>
        <taxon>Pseudomonadati</taxon>
        <taxon>Chlamydiota</taxon>
        <taxon>Chlamydiia</taxon>
        <taxon>Chlamydiales</taxon>
        <taxon>Chlamydiaceae</taxon>
        <taxon>Chlamydia/Chlamydophila group</taxon>
        <taxon>Chlamydia</taxon>
    </lineage>
</organism>
<accession>Q9PJT5</accession>
<dbReference type="EMBL" id="AE002160">
    <property type="protein sequence ID" value="AAF39551.1"/>
    <property type="molecule type" value="Genomic_DNA"/>
</dbReference>
<dbReference type="PIR" id="A81671">
    <property type="entry name" value="A81671"/>
</dbReference>
<dbReference type="RefSeq" id="WP_010231394.1">
    <property type="nucleotide sequence ID" value="NZ_CP063055.1"/>
</dbReference>
<dbReference type="SMR" id="Q9PJT5"/>
<dbReference type="GeneID" id="1246105"/>
<dbReference type="KEGG" id="cmu:TC_0742"/>
<dbReference type="eggNOG" id="COG0217">
    <property type="taxonomic scope" value="Bacteria"/>
</dbReference>
<dbReference type="HOGENOM" id="CLU_062974_3_0_0"/>
<dbReference type="OrthoDB" id="9781053at2"/>
<dbReference type="Proteomes" id="UP000000800">
    <property type="component" value="Chromosome"/>
</dbReference>
<dbReference type="GO" id="GO:0005829">
    <property type="term" value="C:cytosol"/>
    <property type="evidence" value="ECO:0007669"/>
    <property type="project" value="TreeGrafter"/>
</dbReference>
<dbReference type="GO" id="GO:0003677">
    <property type="term" value="F:DNA binding"/>
    <property type="evidence" value="ECO:0007669"/>
    <property type="project" value="UniProtKB-UniRule"/>
</dbReference>
<dbReference type="GO" id="GO:0006355">
    <property type="term" value="P:regulation of DNA-templated transcription"/>
    <property type="evidence" value="ECO:0007669"/>
    <property type="project" value="UniProtKB-UniRule"/>
</dbReference>
<dbReference type="FunFam" id="1.10.10.200:FF:000002">
    <property type="entry name" value="Probable transcriptional regulatory protein CLM62_37755"/>
    <property type="match status" value="1"/>
</dbReference>
<dbReference type="Gene3D" id="1.10.10.200">
    <property type="match status" value="1"/>
</dbReference>
<dbReference type="Gene3D" id="3.30.70.980">
    <property type="match status" value="2"/>
</dbReference>
<dbReference type="HAMAP" id="MF_00693">
    <property type="entry name" value="Transcrip_reg_TACO1"/>
    <property type="match status" value="1"/>
</dbReference>
<dbReference type="InterPro" id="IPR017856">
    <property type="entry name" value="Integrase-like_N"/>
</dbReference>
<dbReference type="InterPro" id="IPR048300">
    <property type="entry name" value="TACO1_YebC-like_2nd/3rd_dom"/>
</dbReference>
<dbReference type="InterPro" id="IPR049083">
    <property type="entry name" value="TACO1_YebC_N"/>
</dbReference>
<dbReference type="InterPro" id="IPR002876">
    <property type="entry name" value="Transcrip_reg_TACO1-like"/>
</dbReference>
<dbReference type="InterPro" id="IPR026564">
    <property type="entry name" value="Transcrip_reg_TACO1-like_dom3"/>
</dbReference>
<dbReference type="InterPro" id="IPR029072">
    <property type="entry name" value="YebC-like"/>
</dbReference>
<dbReference type="NCBIfam" id="NF001030">
    <property type="entry name" value="PRK00110.1"/>
    <property type="match status" value="1"/>
</dbReference>
<dbReference type="NCBIfam" id="NF009044">
    <property type="entry name" value="PRK12378.1"/>
    <property type="match status" value="1"/>
</dbReference>
<dbReference type="NCBIfam" id="TIGR01033">
    <property type="entry name" value="YebC/PmpR family DNA-binding transcriptional regulator"/>
    <property type="match status" value="1"/>
</dbReference>
<dbReference type="PANTHER" id="PTHR12532:SF6">
    <property type="entry name" value="TRANSCRIPTIONAL REGULATORY PROTEIN YEBC-RELATED"/>
    <property type="match status" value="1"/>
</dbReference>
<dbReference type="PANTHER" id="PTHR12532">
    <property type="entry name" value="TRANSLATIONAL ACTIVATOR OF CYTOCHROME C OXIDASE 1"/>
    <property type="match status" value="1"/>
</dbReference>
<dbReference type="Pfam" id="PF20772">
    <property type="entry name" value="TACO1_YebC_N"/>
    <property type="match status" value="1"/>
</dbReference>
<dbReference type="Pfam" id="PF01709">
    <property type="entry name" value="Transcrip_reg"/>
    <property type="match status" value="1"/>
</dbReference>
<dbReference type="SUPFAM" id="SSF75625">
    <property type="entry name" value="YebC-like"/>
    <property type="match status" value="1"/>
</dbReference>
<sequence>MAGHSKWANTKHRKERADHKKGKIFSRTIKELISAVKMGGPDPKSNARLRMIIQKAKDQNIPNENIERNLKKASSADQKNYEEVTYELYGFGGVGIIVEAMTDNKNRTASDMRVAVNKRGGALVEPGSVLYNFSRKGACYVPKSSIDEASLLTHVIDCGGEDLDSEDEEFFLVLCEPTDLASVKEALLAKGVTCSEEKMIYVPLRLVDCDEEAGKSNLALIEWLENIDDVDDVYHNMT</sequence>
<feature type="chain" id="PRO_0000175783" description="Probable transcriptional regulatory protein TC_0742">
    <location>
        <begin position="1"/>
        <end position="238"/>
    </location>
</feature>
<feature type="region of interest" description="Disordered" evidence="2">
    <location>
        <begin position="1"/>
        <end position="21"/>
    </location>
</feature>
<feature type="compositionally biased region" description="Basic residues" evidence="2">
    <location>
        <begin position="9"/>
        <end position="21"/>
    </location>
</feature>
<reference key="1">
    <citation type="journal article" date="2000" name="Nucleic Acids Res.">
        <title>Genome sequences of Chlamydia trachomatis MoPn and Chlamydia pneumoniae AR39.</title>
        <authorList>
            <person name="Read T.D."/>
            <person name="Brunham R.C."/>
            <person name="Shen C."/>
            <person name="Gill S.R."/>
            <person name="Heidelberg J.F."/>
            <person name="White O."/>
            <person name="Hickey E.K."/>
            <person name="Peterson J.D."/>
            <person name="Utterback T.R."/>
            <person name="Berry K.J."/>
            <person name="Bass S."/>
            <person name="Linher K.D."/>
            <person name="Weidman J.F."/>
            <person name="Khouri H.M."/>
            <person name="Craven B."/>
            <person name="Bowman C."/>
            <person name="Dodson R.J."/>
            <person name="Gwinn M.L."/>
            <person name="Nelson W.C."/>
            <person name="DeBoy R.T."/>
            <person name="Kolonay J.F."/>
            <person name="McClarty G."/>
            <person name="Salzberg S.L."/>
            <person name="Eisen J.A."/>
            <person name="Fraser C.M."/>
        </authorList>
    </citation>
    <scope>NUCLEOTIDE SEQUENCE [LARGE SCALE GENOMIC DNA]</scope>
    <source>
        <strain>MoPn / Nigg</strain>
    </source>
</reference>
<name>Y742_CHLMU</name>
<comment type="subcellular location">
    <subcellularLocation>
        <location evidence="1">Cytoplasm</location>
    </subcellularLocation>
</comment>
<comment type="similarity">
    <text evidence="1">Belongs to the TACO1 family.</text>
</comment>